<name>ABCG3_MOUSE</name>
<gene>
    <name type="primary">Abcg3</name>
</gene>
<sequence>MASNNDPTVISMIERHLCDLPETNTSDLKTLTEEAVLSFHNISYQETVQSGFPLRKKAYVIERLSNISGIMKPGLNAIMGPQDGSRSLLLDVLAARRDPRGLSGDILINGKPRPANFKCTSGYVPQNDVVLGTVTVRDNLEFSAALRLPVTITRDEKRRRINEVLELLHLNKEQNIKPRSKELRKRTSIAMELVTEHPILFLDDPTTGLDLRTTTDVILVLRRMSKKGRTIIFSINQPQYSIFKFFDSLTLVASGKVMFHGPAQDALEYFRSAGYNYESHNNPADFFLDVINGGFSNILDTEEDGHEDDKYEELFERQYQVTGKLANMYAQSPLYSETRAILDQLLGEQKLERSSAVETTCVTPFCHQLKWIICQSFKNFKGFPWVTVIQAIITVILATAVGTAFRVLKNDCIEVQMRAGLLYLLTIFQCITSVSAGELFVIDRVRFLHEHTSGYYRVSSYFFGKLLAELIPRRLLPSTVFSLITYVIAGVKMSMKCFFTMICTIMVLAYSASSLPLSIGAGENAVAVPTLLVTIYFVFMLFFSGLSLYSGSFLPKLSWIQYFSIPHYGFRALLHNEFLGQNFCPEHNTEEVSRCHNYVICTGEEFLMIQGIDLSSWGFWENHLALVCTMIILLTITYVQLLQVKNIRNF</sequence>
<feature type="chain" id="PRO_0000093391" description="ATP-binding cassette sub-family G member 3">
    <location>
        <begin position="1"/>
        <end position="650"/>
    </location>
</feature>
<feature type="topological domain" description="Cytoplasmic" evidence="1">
    <location>
        <begin position="1"/>
        <end position="387"/>
    </location>
</feature>
<feature type="transmembrane region" description="Helical; Name=1" evidence="1">
    <location>
        <begin position="388"/>
        <end position="408"/>
    </location>
</feature>
<feature type="topological domain" description="Extracellular" evidence="1">
    <location>
        <begin position="409"/>
        <end position="420"/>
    </location>
</feature>
<feature type="transmembrane region" description="Helical; Name=2" evidence="1">
    <location>
        <begin position="421"/>
        <end position="441"/>
    </location>
</feature>
<feature type="topological domain" description="Cytoplasmic" evidence="1">
    <location>
        <begin position="442"/>
        <end position="469"/>
    </location>
</feature>
<feature type="transmembrane region" description="Helical; Name=3" evidence="1">
    <location>
        <begin position="470"/>
        <end position="490"/>
    </location>
</feature>
<feature type="topological domain" description="Extracellular" evidence="1">
    <location>
        <begin position="491"/>
        <end position="498"/>
    </location>
</feature>
<feature type="transmembrane region" description="Helical; Name=4" evidence="1">
    <location>
        <begin position="499"/>
        <end position="519"/>
    </location>
</feature>
<feature type="topological domain" description="Cytoplasmic" evidence="1">
    <location>
        <begin position="520"/>
        <end position="527"/>
    </location>
</feature>
<feature type="transmembrane region" description="Helical; Name=5" evidence="1">
    <location>
        <begin position="528"/>
        <end position="548"/>
    </location>
</feature>
<feature type="topological domain" description="Extracellular" evidence="1">
    <location>
        <begin position="549"/>
        <end position="623"/>
    </location>
</feature>
<feature type="transmembrane region" description="Helical; Name=6" evidence="1">
    <location>
        <begin position="624"/>
        <end position="644"/>
    </location>
</feature>
<feature type="topological domain" description="Cytoplasmic" evidence="1">
    <location>
        <begin position="645"/>
        <end position="648"/>
    </location>
</feature>
<feature type="domain" description="ABC transporter" evidence="2">
    <location>
        <begin position="37"/>
        <end position="279"/>
    </location>
</feature>
<feature type="domain" description="ABC transmembrane type-2">
    <location>
        <begin position="381"/>
        <end position="644"/>
    </location>
</feature>
<feature type="sequence conflict" description="In Ref. 1; AAK14241." evidence="3" ref="1">
    <original>S</original>
    <variation>P</variation>
    <location>
        <position position="550"/>
    </location>
</feature>
<organism>
    <name type="scientific">Mus musculus</name>
    <name type="common">Mouse</name>
    <dbReference type="NCBI Taxonomy" id="10090"/>
    <lineage>
        <taxon>Eukaryota</taxon>
        <taxon>Metazoa</taxon>
        <taxon>Chordata</taxon>
        <taxon>Craniata</taxon>
        <taxon>Vertebrata</taxon>
        <taxon>Euteleostomi</taxon>
        <taxon>Mammalia</taxon>
        <taxon>Eutheria</taxon>
        <taxon>Euarchontoglires</taxon>
        <taxon>Glires</taxon>
        <taxon>Rodentia</taxon>
        <taxon>Myomorpha</taxon>
        <taxon>Muroidea</taxon>
        <taxon>Muridae</taxon>
        <taxon>Murinae</taxon>
        <taxon>Mus</taxon>
        <taxon>Mus</taxon>
    </lineage>
</organism>
<comment type="subunit">
    <text>May dimerize with another subunit to form a functional transporter.</text>
</comment>
<comment type="subcellular location">
    <subcellularLocation>
        <location evidence="3">Membrane</location>
        <topology evidence="3">Multi-pass membrane protein</topology>
    </subcellularLocation>
</comment>
<comment type="tissue specificity">
    <text>Highest levels of expression in thymus and spleen. Detected in lung and small intestine.</text>
</comment>
<comment type="similarity">
    <text evidence="3">Belongs to the ABC transporter superfamily. ABCG family. Eye pigment precursor importer (TC 3.A.1.204) subfamily.</text>
</comment>
<comment type="caution">
    <text evidence="3">Seems to have a defective ATP-binding region.</text>
</comment>
<dbReference type="EMBL" id="AF324242">
    <property type="protein sequence ID" value="AAK14241.1"/>
    <property type="molecule type" value="mRNA"/>
</dbReference>
<dbReference type="EMBL" id="AK051880">
    <property type="protein sequence ID" value="BAC34799.1"/>
    <property type="molecule type" value="mRNA"/>
</dbReference>
<dbReference type="EMBL" id="CH466529">
    <property type="protein sequence ID" value="EDL20215.1"/>
    <property type="molecule type" value="Genomic_DNA"/>
</dbReference>
<dbReference type="EMBL" id="BC138772">
    <property type="protein sequence ID" value="AAI38773.1"/>
    <property type="molecule type" value="mRNA"/>
</dbReference>
<dbReference type="EMBL" id="BC138773">
    <property type="protein sequence ID" value="AAI38774.1"/>
    <property type="molecule type" value="mRNA"/>
</dbReference>
<dbReference type="CCDS" id="CCDS19488.1"/>
<dbReference type="RefSeq" id="NP_084515.2">
    <property type="nucleotide sequence ID" value="NM_030239.3"/>
</dbReference>
<dbReference type="SMR" id="Q99P81"/>
<dbReference type="FunCoup" id="Q99P81">
    <property type="interactions" value="94"/>
</dbReference>
<dbReference type="IntAct" id="Q99P81">
    <property type="interactions" value="13"/>
</dbReference>
<dbReference type="STRING" id="10090.ENSMUSP00000031239"/>
<dbReference type="iPTMnet" id="Q99P81"/>
<dbReference type="PhosphoSitePlus" id="Q99P81"/>
<dbReference type="jPOST" id="Q99P81"/>
<dbReference type="PaxDb" id="10090-ENSMUSP00000031239"/>
<dbReference type="ProteomicsDB" id="285958"/>
<dbReference type="Antibodypedia" id="14577">
    <property type="antibodies" value="359 antibodies from 46 providers"/>
</dbReference>
<dbReference type="DNASU" id="27405"/>
<dbReference type="Ensembl" id="ENSMUST00000031239.13">
    <property type="protein sequence ID" value="ENSMUSP00000031239.7"/>
    <property type="gene ID" value="ENSMUSG00000029299.15"/>
</dbReference>
<dbReference type="GeneID" id="27405"/>
<dbReference type="KEGG" id="mmu:27405"/>
<dbReference type="UCSC" id="uc008ykt.1">
    <property type="organism name" value="mouse"/>
</dbReference>
<dbReference type="AGR" id="MGI:1351624"/>
<dbReference type="CTD" id="27405"/>
<dbReference type="MGI" id="MGI:1351624">
    <property type="gene designation" value="Abcg3"/>
</dbReference>
<dbReference type="VEuPathDB" id="HostDB:ENSMUSG00000029299"/>
<dbReference type="eggNOG" id="KOG0061">
    <property type="taxonomic scope" value="Eukaryota"/>
</dbReference>
<dbReference type="GeneTree" id="ENSGT00940000162658"/>
<dbReference type="HOGENOM" id="CLU_000604_57_8_1"/>
<dbReference type="InParanoid" id="Q99P81"/>
<dbReference type="OMA" id="NFMAFLH"/>
<dbReference type="OrthoDB" id="66620at2759"/>
<dbReference type="PhylomeDB" id="Q99P81"/>
<dbReference type="TreeFam" id="TF105211"/>
<dbReference type="BioGRID-ORCS" id="27405">
    <property type="hits" value="3 hits in 76 CRISPR screens"/>
</dbReference>
<dbReference type="ChiTaRS" id="Abcg3">
    <property type="organism name" value="mouse"/>
</dbReference>
<dbReference type="PRO" id="PR:Q99P81"/>
<dbReference type="Proteomes" id="UP000000589">
    <property type="component" value="Chromosome 5"/>
</dbReference>
<dbReference type="RNAct" id="Q99P81">
    <property type="molecule type" value="protein"/>
</dbReference>
<dbReference type="Bgee" id="ENSMUSG00000029299">
    <property type="expression patterns" value="Expressed in dorsal pancreas and 46 other cell types or tissues"/>
</dbReference>
<dbReference type="ExpressionAtlas" id="Q99P81">
    <property type="expression patterns" value="baseline and differential"/>
</dbReference>
<dbReference type="GO" id="GO:0016020">
    <property type="term" value="C:membrane"/>
    <property type="evidence" value="ECO:0007669"/>
    <property type="project" value="UniProtKB-SubCell"/>
</dbReference>
<dbReference type="GO" id="GO:0140359">
    <property type="term" value="F:ABC-type transporter activity"/>
    <property type="evidence" value="ECO:0007669"/>
    <property type="project" value="InterPro"/>
</dbReference>
<dbReference type="GO" id="GO:0005524">
    <property type="term" value="F:ATP binding"/>
    <property type="evidence" value="ECO:0007669"/>
    <property type="project" value="InterPro"/>
</dbReference>
<dbReference type="GO" id="GO:0016887">
    <property type="term" value="F:ATP hydrolysis activity"/>
    <property type="evidence" value="ECO:0007669"/>
    <property type="project" value="InterPro"/>
</dbReference>
<dbReference type="FunFam" id="3.40.50.300:FF:000622">
    <property type="entry name" value="ATP-binding cassette sub-family G member 2"/>
    <property type="match status" value="1"/>
</dbReference>
<dbReference type="Gene3D" id="3.40.50.300">
    <property type="entry name" value="P-loop containing nucleotide triphosphate hydrolases"/>
    <property type="match status" value="1"/>
</dbReference>
<dbReference type="InterPro" id="IPR013525">
    <property type="entry name" value="ABC2_TM"/>
</dbReference>
<dbReference type="InterPro" id="IPR003439">
    <property type="entry name" value="ABC_transporter-like_ATP-bd"/>
</dbReference>
<dbReference type="InterPro" id="IPR043926">
    <property type="entry name" value="ABCG_dom"/>
</dbReference>
<dbReference type="InterPro" id="IPR050352">
    <property type="entry name" value="ABCG_transporters"/>
</dbReference>
<dbReference type="InterPro" id="IPR027417">
    <property type="entry name" value="P-loop_NTPase"/>
</dbReference>
<dbReference type="PANTHER" id="PTHR48041">
    <property type="entry name" value="ABC TRANSPORTER G FAMILY MEMBER 28"/>
    <property type="match status" value="1"/>
</dbReference>
<dbReference type="PANTHER" id="PTHR48041:SF70">
    <property type="entry name" value="ATP-BINDING CASSETTE SUB-FAMILY G MEMBER 3"/>
    <property type="match status" value="1"/>
</dbReference>
<dbReference type="Pfam" id="PF01061">
    <property type="entry name" value="ABC2_membrane"/>
    <property type="match status" value="1"/>
</dbReference>
<dbReference type="Pfam" id="PF19055">
    <property type="entry name" value="ABC2_membrane_7"/>
    <property type="match status" value="1"/>
</dbReference>
<dbReference type="Pfam" id="PF00005">
    <property type="entry name" value="ABC_tran"/>
    <property type="match status" value="1"/>
</dbReference>
<dbReference type="SUPFAM" id="SSF52540">
    <property type="entry name" value="P-loop containing nucleoside triphosphate hydrolases"/>
    <property type="match status" value="1"/>
</dbReference>
<dbReference type="PROSITE" id="PS50893">
    <property type="entry name" value="ABC_TRANSPORTER_2"/>
    <property type="match status" value="1"/>
</dbReference>
<accession>Q99P81</accession>
<accession>Q8BKI5</accession>
<reference key="1">
    <citation type="journal article" date="2001" name="Mamm. Genome">
        <title>An ATP-binding cassette gene (ABCG3) closely related to the multidrug transporter ABCG2 (MXR/ABCP) has an unusual ATP-binding domain.</title>
        <authorList>
            <person name="Mickley L."/>
            <person name="Jain P."/>
            <person name="Miyake K."/>
            <person name="Schriml L.M."/>
            <person name="Rao K."/>
            <person name="Fojo T."/>
            <person name="Bates S."/>
            <person name="Dean M."/>
        </authorList>
    </citation>
    <scope>NUCLEOTIDE SEQUENCE [MRNA]</scope>
    <source>
        <tissue>Spleen</tissue>
    </source>
</reference>
<reference key="2">
    <citation type="journal article" date="2005" name="Science">
        <title>The transcriptional landscape of the mammalian genome.</title>
        <authorList>
            <person name="Carninci P."/>
            <person name="Kasukawa T."/>
            <person name="Katayama S."/>
            <person name="Gough J."/>
            <person name="Frith M.C."/>
            <person name="Maeda N."/>
            <person name="Oyama R."/>
            <person name="Ravasi T."/>
            <person name="Lenhard B."/>
            <person name="Wells C."/>
            <person name="Kodzius R."/>
            <person name="Shimokawa K."/>
            <person name="Bajic V.B."/>
            <person name="Brenner S.E."/>
            <person name="Batalov S."/>
            <person name="Forrest A.R."/>
            <person name="Zavolan M."/>
            <person name="Davis M.J."/>
            <person name="Wilming L.G."/>
            <person name="Aidinis V."/>
            <person name="Allen J.E."/>
            <person name="Ambesi-Impiombato A."/>
            <person name="Apweiler R."/>
            <person name="Aturaliya R.N."/>
            <person name="Bailey T.L."/>
            <person name="Bansal M."/>
            <person name="Baxter L."/>
            <person name="Beisel K.W."/>
            <person name="Bersano T."/>
            <person name="Bono H."/>
            <person name="Chalk A.M."/>
            <person name="Chiu K.P."/>
            <person name="Choudhary V."/>
            <person name="Christoffels A."/>
            <person name="Clutterbuck D.R."/>
            <person name="Crowe M.L."/>
            <person name="Dalla E."/>
            <person name="Dalrymple B.P."/>
            <person name="de Bono B."/>
            <person name="Della Gatta G."/>
            <person name="di Bernardo D."/>
            <person name="Down T."/>
            <person name="Engstrom P."/>
            <person name="Fagiolini M."/>
            <person name="Faulkner G."/>
            <person name="Fletcher C.F."/>
            <person name="Fukushima T."/>
            <person name="Furuno M."/>
            <person name="Futaki S."/>
            <person name="Gariboldi M."/>
            <person name="Georgii-Hemming P."/>
            <person name="Gingeras T.R."/>
            <person name="Gojobori T."/>
            <person name="Green R.E."/>
            <person name="Gustincich S."/>
            <person name="Harbers M."/>
            <person name="Hayashi Y."/>
            <person name="Hensch T.K."/>
            <person name="Hirokawa N."/>
            <person name="Hill D."/>
            <person name="Huminiecki L."/>
            <person name="Iacono M."/>
            <person name="Ikeo K."/>
            <person name="Iwama A."/>
            <person name="Ishikawa T."/>
            <person name="Jakt M."/>
            <person name="Kanapin A."/>
            <person name="Katoh M."/>
            <person name="Kawasawa Y."/>
            <person name="Kelso J."/>
            <person name="Kitamura H."/>
            <person name="Kitano H."/>
            <person name="Kollias G."/>
            <person name="Krishnan S.P."/>
            <person name="Kruger A."/>
            <person name="Kummerfeld S.K."/>
            <person name="Kurochkin I.V."/>
            <person name="Lareau L.F."/>
            <person name="Lazarevic D."/>
            <person name="Lipovich L."/>
            <person name="Liu J."/>
            <person name="Liuni S."/>
            <person name="McWilliam S."/>
            <person name="Madan Babu M."/>
            <person name="Madera M."/>
            <person name="Marchionni L."/>
            <person name="Matsuda H."/>
            <person name="Matsuzawa S."/>
            <person name="Miki H."/>
            <person name="Mignone F."/>
            <person name="Miyake S."/>
            <person name="Morris K."/>
            <person name="Mottagui-Tabar S."/>
            <person name="Mulder N."/>
            <person name="Nakano N."/>
            <person name="Nakauchi H."/>
            <person name="Ng P."/>
            <person name="Nilsson R."/>
            <person name="Nishiguchi S."/>
            <person name="Nishikawa S."/>
            <person name="Nori F."/>
            <person name="Ohara O."/>
            <person name="Okazaki Y."/>
            <person name="Orlando V."/>
            <person name="Pang K.C."/>
            <person name="Pavan W.J."/>
            <person name="Pavesi G."/>
            <person name="Pesole G."/>
            <person name="Petrovsky N."/>
            <person name="Piazza S."/>
            <person name="Reed J."/>
            <person name="Reid J.F."/>
            <person name="Ring B.Z."/>
            <person name="Ringwald M."/>
            <person name="Rost B."/>
            <person name="Ruan Y."/>
            <person name="Salzberg S.L."/>
            <person name="Sandelin A."/>
            <person name="Schneider C."/>
            <person name="Schoenbach C."/>
            <person name="Sekiguchi K."/>
            <person name="Semple C.A."/>
            <person name="Seno S."/>
            <person name="Sessa L."/>
            <person name="Sheng Y."/>
            <person name="Shibata Y."/>
            <person name="Shimada H."/>
            <person name="Shimada K."/>
            <person name="Silva D."/>
            <person name="Sinclair B."/>
            <person name="Sperling S."/>
            <person name="Stupka E."/>
            <person name="Sugiura K."/>
            <person name="Sultana R."/>
            <person name="Takenaka Y."/>
            <person name="Taki K."/>
            <person name="Tammoja K."/>
            <person name="Tan S.L."/>
            <person name="Tang S."/>
            <person name="Taylor M.S."/>
            <person name="Tegner J."/>
            <person name="Teichmann S.A."/>
            <person name="Ueda H.R."/>
            <person name="van Nimwegen E."/>
            <person name="Verardo R."/>
            <person name="Wei C.L."/>
            <person name="Yagi K."/>
            <person name="Yamanishi H."/>
            <person name="Zabarovsky E."/>
            <person name="Zhu S."/>
            <person name="Zimmer A."/>
            <person name="Hide W."/>
            <person name="Bult C."/>
            <person name="Grimmond S.M."/>
            <person name="Teasdale R.D."/>
            <person name="Liu E.T."/>
            <person name="Brusic V."/>
            <person name="Quackenbush J."/>
            <person name="Wahlestedt C."/>
            <person name="Mattick J.S."/>
            <person name="Hume D.A."/>
            <person name="Kai C."/>
            <person name="Sasaki D."/>
            <person name="Tomaru Y."/>
            <person name="Fukuda S."/>
            <person name="Kanamori-Katayama M."/>
            <person name="Suzuki M."/>
            <person name="Aoki J."/>
            <person name="Arakawa T."/>
            <person name="Iida J."/>
            <person name="Imamura K."/>
            <person name="Itoh M."/>
            <person name="Kato T."/>
            <person name="Kawaji H."/>
            <person name="Kawagashira N."/>
            <person name="Kawashima T."/>
            <person name="Kojima M."/>
            <person name="Kondo S."/>
            <person name="Konno H."/>
            <person name="Nakano K."/>
            <person name="Ninomiya N."/>
            <person name="Nishio T."/>
            <person name="Okada M."/>
            <person name="Plessy C."/>
            <person name="Shibata K."/>
            <person name="Shiraki T."/>
            <person name="Suzuki S."/>
            <person name="Tagami M."/>
            <person name="Waki K."/>
            <person name="Watahiki A."/>
            <person name="Okamura-Oho Y."/>
            <person name="Suzuki H."/>
            <person name="Kawai J."/>
            <person name="Hayashizaki Y."/>
        </authorList>
    </citation>
    <scope>NUCLEOTIDE SEQUENCE [LARGE SCALE MRNA]</scope>
    <source>
        <strain>C57BL/6J</strain>
        <tissue>Eye</tissue>
    </source>
</reference>
<reference key="3">
    <citation type="submission" date="2005-09" db="EMBL/GenBank/DDBJ databases">
        <authorList>
            <person name="Mural R.J."/>
            <person name="Adams M.D."/>
            <person name="Myers E.W."/>
            <person name="Smith H.O."/>
            <person name="Venter J.C."/>
        </authorList>
    </citation>
    <scope>NUCLEOTIDE SEQUENCE [LARGE SCALE GENOMIC DNA]</scope>
</reference>
<reference key="4">
    <citation type="journal article" date="2004" name="Genome Res.">
        <title>The status, quality, and expansion of the NIH full-length cDNA project: the Mammalian Gene Collection (MGC).</title>
        <authorList>
            <consortium name="The MGC Project Team"/>
        </authorList>
    </citation>
    <scope>NUCLEOTIDE SEQUENCE [LARGE SCALE MRNA]</scope>
    <source>
        <tissue>Lung</tissue>
    </source>
</reference>
<reference key="5">
    <citation type="journal article" date="2010" name="Cell">
        <title>A tissue-specific atlas of mouse protein phosphorylation and expression.</title>
        <authorList>
            <person name="Huttlin E.L."/>
            <person name="Jedrychowski M.P."/>
            <person name="Elias J.E."/>
            <person name="Goswami T."/>
            <person name="Rad R."/>
            <person name="Beausoleil S.A."/>
            <person name="Villen J."/>
            <person name="Haas W."/>
            <person name="Sowa M.E."/>
            <person name="Gygi S.P."/>
        </authorList>
    </citation>
    <scope>IDENTIFICATION BY MASS SPECTROMETRY [LARGE SCALE ANALYSIS]</scope>
    <source>
        <tissue>Spleen</tissue>
    </source>
</reference>
<evidence type="ECO:0000255" key="1"/>
<evidence type="ECO:0000255" key="2">
    <source>
        <dbReference type="PROSITE-ProRule" id="PRU00434"/>
    </source>
</evidence>
<evidence type="ECO:0000305" key="3"/>
<protein>
    <recommendedName>
        <fullName>ATP-binding cassette sub-family G member 3</fullName>
    </recommendedName>
</protein>
<keyword id="KW-0472">Membrane</keyword>
<keyword id="KW-1185">Reference proteome</keyword>
<keyword id="KW-0812">Transmembrane</keyword>
<keyword id="KW-1133">Transmembrane helix</keyword>
<keyword id="KW-0813">Transport</keyword>
<proteinExistence type="evidence at protein level"/>